<dbReference type="EC" id="2.5.1.61" evidence="1"/>
<dbReference type="EMBL" id="CP000076">
    <property type="protein sequence ID" value="AAY95191.1"/>
    <property type="molecule type" value="Genomic_DNA"/>
</dbReference>
<dbReference type="RefSeq" id="WP_011064175.1">
    <property type="nucleotide sequence ID" value="NC_004129.6"/>
</dbReference>
<dbReference type="SMR" id="Q4K3X3"/>
<dbReference type="STRING" id="220664.PFL_6002"/>
<dbReference type="GeneID" id="57478960"/>
<dbReference type="KEGG" id="pfl:PFL_6002"/>
<dbReference type="PATRIC" id="fig|220664.5.peg.6123"/>
<dbReference type="eggNOG" id="COG0181">
    <property type="taxonomic scope" value="Bacteria"/>
</dbReference>
<dbReference type="HOGENOM" id="CLU_019704_0_2_6"/>
<dbReference type="UniPathway" id="UPA00251">
    <property type="reaction ID" value="UER00319"/>
</dbReference>
<dbReference type="Proteomes" id="UP000008540">
    <property type="component" value="Chromosome"/>
</dbReference>
<dbReference type="GO" id="GO:0005737">
    <property type="term" value="C:cytoplasm"/>
    <property type="evidence" value="ECO:0007669"/>
    <property type="project" value="TreeGrafter"/>
</dbReference>
<dbReference type="GO" id="GO:0004418">
    <property type="term" value="F:hydroxymethylbilane synthase activity"/>
    <property type="evidence" value="ECO:0007669"/>
    <property type="project" value="UniProtKB-UniRule"/>
</dbReference>
<dbReference type="GO" id="GO:0006782">
    <property type="term" value="P:protoporphyrinogen IX biosynthetic process"/>
    <property type="evidence" value="ECO:0007669"/>
    <property type="project" value="UniProtKB-UniRule"/>
</dbReference>
<dbReference type="CDD" id="cd13646">
    <property type="entry name" value="PBP2_EcHMBS_like"/>
    <property type="match status" value="1"/>
</dbReference>
<dbReference type="FunFam" id="3.30.160.40:FF:000002">
    <property type="entry name" value="Porphobilinogen deaminase"/>
    <property type="match status" value="1"/>
</dbReference>
<dbReference type="FunFam" id="3.40.190.10:FF:000004">
    <property type="entry name" value="Porphobilinogen deaminase"/>
    <property type="match status" value="1"/>
</dbReference>
<dbReference type="FunFam" id="3.40.190.10:FF:000005">
    <property type="entry name" value="Porphobilinogen deaminase"/>
    <property type="match status" value="1"/>
</dbReference>
<dbReference type="Gene3D" id="3.40.190.10">
    <property type="entry name" value="Periplasmic binding protein-like II"/>
    <property type="match status" value="2"/>
</dbReference>
<dbReference type="Gene3D" id="3.30.160.40">
    <property type="entry name" value="Porphobilinogen deaminase, C-terminal domain"/>
    <property type="match status" value="1"/>
</dbReference>
<dbReference type="HAMAP" id="MF_00260">
    <property type="entry name" value="Porphobil_deam"/>
    <property type="match status" value="1"/>
</dbReference>
<dbReference type="InterPro" id="IPR000860">
    <property type="entry name" value="HemC"/>
</dbReference>
<dbReference type="InterPro" id="IPR022419">
    <property type="entry name" value="Porphobilin_deaminase_cofac_BS"/>
</dbReference>
<dbReference type="InterPro" id="IPR022417">
    <property type="entry name" value="Porphobilin_deaminase_N"/>
</dbReference>
<dbReference type="InterPro" id="IPR022418">
    <property type="entry name" value="Porphobilinogen_deaminase_C"/>
</dbReference>
<dbReference type="InterPro" id="IPR036803">
    <property type="entry name" value="Porphobilinogen_deaminase_C_sf"/>
</dbReference>
<dbReference type="NCBIfam" id="TIGR00212">
    <property type="entry name" value="hemC"/>
    <property type="match status" value="1"/>
</dbReference>
<dbReference type="PANTHER" id="PTHR11557">
    <property type="entry name" value="PORPHOBILINOGEN DEAMINASE"/>
    <property type="match status" value="1"/>
</dbReference>
<dbReference type="PANTHER" id="PTHR11557:SF0">
    <property type="entry name" value="PORPHOBILINOGEN DEAMINASE"/>
    <property type="match status" value="1"/>
</dbReference>
<dbReference type="Pfam" id="PF01379">
    <property type="entry name" value="Porphobil_deam"/>
    <property type="match status" value="1"/>
</dbReference>
<dbReference type="Pfam" id="PF03900">
    <property type="entry name" value="Porphobil_deamC"/>
    <property type="match status" value="1"/>
</dbReference>
<dbReference type="PIRSF" id="PIRSF001438">
    <property type="entry name" value="4pyrrol_synth_OHMeBilane_synth"/>
    <property type="match status" value="1"/>
</dbReference>
<dbReference type="PRINTS" id="PR00151">
    <property type="entry name" value="PORPHBDMNASE"/>
</dbReference>
<dbReference type="SUPFAM" id="SSF53850">
    <property type="entry name" value="Periplasmic binding protein-like II"/>
    <property type="match status" value="1"/>
</dbReference>
<dbReference type="SUPFAM" id="SSF54782">
    <property type="entry name" value="Porphobilinogen deaminase (hydroxymethylbilane synthase), C-terminal domain"/>
    <property type="match status" value="1"/>
</dbReference>
<dbReference type="PROSITE" id="PS00533">
    <property type="entry name" value="PORPHOBILINOGEN_DEAM"/>
    <property type="match status" value="1"/>
</dbReference>
<comment type="function">
    <text evidence="1">Tetrapolymerization of the monopyrrole PBG into the hydroxymethylbilane pre-uroporphyrinogen in several discrete steps.</text>
</comment>
<comment type="catalytic activity">
    <reaction evidence="1">
        <text>4 porphobilinogen + H2O = hydroxymethylbilane + 4 NH4(+)</text>
        <dbReference type="Rhea" id="RHEA:13185"/>
        <dbReference type="ChEBI" id="CHEBI:15377"/>
        <dbReference type="ChEBI" id="CHEBI:28938"/>
        <dbReference type="ChEBI" id="CHEBI:57845"/>
        <dbReference type="ChEBI" id="CHEBI:58126"/>
        <dbReference type="EC" id="2.5.1.61"/>
    </reaction>
</comment>
<comment type="cofactor">
    <cofactor evidence="1">
        <name>dipyrromethane</name>
        <dbReference type="ChEBI" id="CHEBI:60342"/>
    </cofactor>
    <text evidence="1">Binds 1 dipyrromethane group covalently.</text>
</comment>
<comment type="pathway">
    <text evidence="1">Porphyrin-containing compound metabolism; protoporphyrin-IX biosynthesis; coproporphyrinogen-III from 5-aminolevulinate: step 2/4.</text>
</comment>
<comment type="subunit">
    <text evidence="1">Monomer.</text>
</comment>
<comment type="miscellaneous">
    <text evidence="1">The porphobilinogen subunits are added to the dipyrromethane group.</text>
</comment>
<comment type="similarity">
    <text evidence="1">Belongs to the HMBS family.</text>
</comment>
<sequence length="313" mass="33422">MSSREIRIATRKSALALWQAEYVKARLQEAHPGLVVTLVPMVSRGDKLLDSPLSKIGGKGLFVKELETALLENQADIAVHSMKDVPMDFPEGLGLFCICEREDPRDAFVSNTYASLDELPEGSVVGTSSLRRQAQLLTRRPDLQIRFLRGNVNTRLAKLDAGEYDAIILAAAGLIRLGFEDRISSSISVDDSLPAGGQGAVGIECRSADIEIHALLAPLHHADTASRVTAERALNKHLNGGCQVPIACYAVLEGEQIWLRGLVGEPSGGLLLSAEARGPRASAAELGVQVADALLAQGADDILRAVYGEAGEE</sequence>
<organism>
    <name type="scientific">Pseudomonas fluorescens (strain ATCC BAA-477 / NRRL B-23932 / Pf-5)</name>
    <dbReference type="NCBI Taxonomy" id="220664"/>
    <lineage>
        <taxon>Bacteria</taxon>
        <taxon>Pseudomonadati</taxon>
        <taxon>Pseudomonadota</taxon>
        <taxon>Gammaproteobacteria</taxon>
        <taxon>Pseudomonadales</taxon>
        <taxon>Pseudomonadaceae</taxon>
        <taxon>Pseudomonas</taxon>
    </lineage>
</organism>
<gene>
    <name evidence="1" type="primary">hemC</name>
    <name type="ordered locus">PFL_6002</name>
</gene>
<evidence type="ECO:0000255" key="1">
    <source>
        <dbReference type="HAMAP-Rule" id="MF_00260"/>
    </source>
</evidence>
<proteinExistence type="inferred from homology"/>
<keyword id="KW-0627">Porphyrin biosynthesis</keyword>
<keyword id="KW-0808">Transferase</keyword>
<name>HEM3_PSEF5</name>
<reference key="1">
    <citation type="journal article" date="2005" name="Nat. Biotechnol.">
        <title>Complete genome sequence of the plant commensal Pseudomonas fluorescens Pf-5.</title>
        <authorList>
            <person name="Paulsen I.T."/>
            <person name="Press C.M."/>
            <person name="Ravel J."/>
            <person name="Kobayashi D.Y."/>
            <person name="Myers G.S.A."/>
            <person name="Mavrodi D.V."/>
            <person name="DeBoy R.T."/>
            <person name="Seshadri R."/>
            <person name="Ren Q."/>
            <person name="Madupu R."/>
            <person name="Dodson R.J."/>
            <person name="Durkin A.S."/>
            <person name="Brinkac L.M."/>
            <person name="Daugherty S.C."/>
            <person name="Sullivan S.A."/>
            <person name="Rosovitz M.J."/>
            <person name="Gwinn M.L."/>
            <person name="Zhou L."/>
            <person name="Schneider D.J."/>
            <person name="Cartinhour S.W."/>
            <person name="Nelson W.C."/>
            <person name="Weidman J."/>
            <person name="Watkins K."/>
            <person name="Tran K."/>
            <person name="Khouri H."/>
            <person name="Pierson E.A."/>
            <person name="Pierson L.S. III"/>
            <person name="Thomashow L.S."/>
            <person name="Loper J.E."/>
        </authorList>
    </citation>
    <scope>NUCLEOTIDE SEQUENCE [LARGE SCALE GENOMIC DNA]</scope>
    <source>
        <strain>ATCC BAA-477 / NRRL B-23932 / Pf-5</strain>
    </source>
</reference>
<accession>Q4K3X3</accession>
<protein>
    <recommendedName>
        <fullName evidence="1">Porphobilinogen deaminase</fullName>
        <shortName evidence="1">PBG</shortName>
        <ecNumber evidence="1">2.5.1.61</ecNumber>
    </recommendedName>
    <alternativeName>
        <fullName evidence="1">Hydroxymethylbilane synthase</fullName>
        <shortName evidence="1">HMBS</shortName>
    </alternativeName>
    <alternativeName>
        <fullName evidence="1">Pre-uroporphyrinogen synthase</fullName>
    </alternativeName>
</protein>
<feature type="chain" id="PRO_0000304267" description="Porphobilinogen deaminase">
    <location>
        <begin position="1"/>
        <end position="313"/>
    </location>
</feature>
<feature type="modified residue" description="S-(dipyrrolylmethanemethyl)cysteine" evidence="1">
    <location>
        <position position="242"/>
    </location>
</feature>